<name>HLDD_ECOL5</name>
<comment type="function">
    <text evidence="1">Catalyzes the interconversion between ADP-D-glycero-beta-D-manno-heptose and ADP-L-glycero-beta-D-manno-heptose via an epimerization at carbon 6 of the heptose.</text>
</comment>
<comment type="catalytic activity">
    <reaction evidence="1">
        <text>ADP-D-glycero-beta-D-manno-heptose = ADP-L-glycero-beta-D-manno-heptose</text>
        <dbReference type="Rhea" id="RHEA:17577"/>
        <dbReference type="ChEBI" id="CHEBI:59967"/>
        <dbReference type="ChEBI" id="CHEBI:61506"/>
        <dbReference type="EC" id="5.1.3.20"/>
    </reaction>
</comment>
<comment type="cofactor">
    <cofactor evidence="1">
        <name>NADP(+)</name>
        <dbReference type="ChEBI" id="CHEBI:58349"/>
    </cofactor>
    <text evidence="1">Binds 1 NADP(+) per subunit.</text>
</comment>
<comment type="pathway">
    <text evidence="1">Nucleotide-sugar biosynthesis; ADP-L-glycero-beta-D-manno-heptose biosynthesis; ADP-L-glycero-beta-D-manno-heptose from D-glycero-beta-D-manno-heptose 7-phosphate: step 4/4.</text>
</comment>
<comment type="subunit">
    <text evidence="1">Homopentamer.</text>
</comment>
<comment type="domain">
    <text evidence="1">Contains a large N-terminal NADP-binding domain, and a smaller C-terminal substrate-binding domain.</text>
</comment>
<comment type="similarity">
    <text evidence="1">Belongs to the NAD(P)-dependent epimerase/dehydratase family. HldD subfamily.</text>
</comment>
<evidence type="ECO:0000255" key="1">
    <source>
        <dbReference type="HAMAP-Rule" id="MF_01601"/>
    </source>
</evidence>
<dbReference type="EC" id="5.1.3.20" evidence="1"/>
<dbReference type="EMBL" id="CP000247">
    <property type="protein sequence ID" value="ABG71691.1"/>
    <property type="molecule type" value="Genomic_DNA"/>
</dbReference>
<dbReference type="SMR" id="Q0TBI8"/>
<dbReference type="KEGG" id="ecp:ECP_3719"/>
<dbReference type="HOGENOM" id="CLU_007383_1_3_6"/>
<dbReference type="UniPathway" id="UPA00356">
    <property type="reaction ID" value="UER00440"/>
</dbReference>
<dbReference type="Proteomes" id="UP000009182">
    <property type="component" value="Chromosome"/>
</dbReference>
<dbReference type="GO" id="GO:0008712">
    <property type="term" value="F:ADP-glyceromanno-heptose 6-epimerase activity"/>
    <property type="evidence" value="ECO:0007669"/>
    <property type="project" value="UniProtKB-UniRule"/>
</dbReference>
<dbReference type="GO" id="GO:0050661">
    <property type="term" value="F:NADP binding"/>
    <property type="evidence" value="ECO:0007669"/>
    <property type="project" value="InterPro"/>
</dbReference>
<dbReference type="GO" id="GO:0097171">
    <property type="term" value="P:ADP-L-glycero-beta-D-manno-heptose biosynthetic process"/>
    <property type="evidence" value="ECO:0007669"/>
    <property type="project" value="UniProtKB-UniPathway"/>
</dbReference>
<dbReference type="GO" id="GO:0005975">
    <property type="term" value="P:carbohydrate metabolic process"/>
    <property type="evidence" value="ECO:0007669"/>
    <property type="project" value="UniProtKB-UniRule"/>
</dbReference>
<dbReference type="CDD" id="cd05248">
    <property type="entry name" value="ADP_GME_SDR_e"/>
    <property type="match status" value="1"/>
</dbReference>
<dbReference type="Gene3D" id="3.40.50.720">
    <property type="entry name" value="NAD(P)-binding Rossmann-like Domain"/>
    <property type="match status" value="1"/>
</dbReference>
<dbReference type="Gene3D" id="3.90.25.10">
    <property type="entry name" value="UDP-galactose 4-epimerase, domain 1"/>
    <property type="match status" value="1"/>
</dbReference>
<dbReference type="HAMAP" id="MF_01601">
    <property type="entry name" value="Heptose_epimerase"/>
    <property type="match status" value="1"/>
</dbReference>
<dbReference type="InterPro" id="IPR001509">
    <property type="entry name" value="Epimerase_deHydtase"/>
</dbReference>
<dbReference type="InterPro" id="IPR011912">
    <property type="entry name" value="Heptose_epim"/>
</dbReference>
<dbReference type="InterPro" id="IPR036291">
    <property type="entry name" value="NAD(P)-bd_dom_sf"/>
</dbReference>
<dbReference type="NCBIfam" id="TIGR02197">
    <property type="entry name" value="heptose_epim"/>
    <property type="match status" value="1"/>
</dbReference>
<dbReference type="NCBIfam" id="NF008360">
    <property type="entry name" value="PRK11150.1"/>
    <property type="match status" value="1"/>
</dbReference>
<dbReference type="PANTHER" id="PTHR43103:SF3">
    <property type="entry name" value="ADP-L-GLYCERO-D-MANNO-HEPTOSE-6-EPIMERASE"/>
    <property type="match status" value="1"/>
</dbReference>
<dbReference type="PANTHER" id="PTHR43103">
    <property type="entry name" value="NUCLEOSIDE-DIPHOSPHATE-SUGAR EPIMERASE"/>
    <property type="match status" value="1"/>
</dbReference>
<dbReference type="Pfam" id="PF01370">
    <property type="entry name" value="Epimerase"/>
    <property type="match status" value="1"/>
</dbReference>
<dbReference type="SUPFAM" id="SSF51735">
    <property type="entry name" value="NAD(P)-binding Rossmann-fold domains"/>
    <property type="match status" value="1"/>
</dbReference>
<feature type="chain" id="PRO_0000255730" description="ADP-L-glycero-D-manno-heptose-6-epimerase">
    <location>
        <begin position="1"/>
        <end position="310"/>
    </location>
</feature>
<feature type="active site" description="Proton acceptor" evidence="1">
    <location>
        <position position="140"/>
    </location>
</feature>
<feature type="active site" description="Proton acceptor" evidence="1">
    <location>
        <position position="178"/>
    </location>
</feature>
<feature type="binding site" evidence="1">
    <location>
        <begin position="10"/>
        <end position="11"/>
    </location>
    <ligand>
        <name>NADP(+)</name>
        <dbReference type="ChEBI" id="CHEBI:58349"/>
    </ligand>
</feature>
<feature type="binding site" evidence="1">
    <location>
        <begin position="31"/>
        <end position="32"/>
    </location>
    <ligand>
        <name>NADP(+)</name>
        <dbReference type="ChEBI" id="CHEBI:58349"/>
    </ligand>
</feature>
<feature type="binding site" evidence="1">
    <location>
        <position position="38"/>
    </location>
    <ligand>
        <name>NADP(+)</name>
        <dbReference type="ChEBI" id="CHEBI:58349"/>
    </ligand>
</feature>
<feature type="binding site" evidence="1">
    <location>
        <position position="53"/>
    </location>
    <ligand>
        <name>NADP(+)</name>
        <dbReference type="ChEBI" id="CHEBI:58349"/>
    </ligand>
</feature>
<feature type="binding site" evidence="1">
    <location>
        <begin position="75"/>
        <end position="79"/>
    </location>
    <ligand>
        <name>NADP(+)</name>
        <dbReference type="ChEBI" id="CHEBI:58349"/>
    </ligand>
</feature>
<feature type="binding site" evidence="1">
    <location>
        <position position="92"/>
    </location>
    <ligand>
        <name>NADP(+)</name>
        <dbReference type="ChEBI" id="CHEBI:58349"/>
    </ligand>
</feature>
<feature type="binding site" evidence="1">
    <location>
        <position position="144"/>
    </location>
    <ligand>
        <name>NADP(+)</name>
        <dbReference type="ChEBI" id="CHEBI:58349"/>
    </ligand>
</feature>
<feature type="binding site" evidence="1">
    <location>
        <position position="169"/>
    </location>
    <ligand>
        <name>substrate</name>
    </ligand>
</feature>
<feature type="binding site" evidence="1">
    <location>
        <position position="170"/>
    </location>
    <ligand>
        <name>NADP(+)</name>
        <dbReference type="ChEBI" id="CHEBI:58349"/>
    </ligand>
</feature>
<feature type="binding site" evidence="1">
    <location>
        <position position="178"/>
    </location>
    <ligand>
        <name>NADP(+)</name>
        <dbReference type="ChEBI" id="CHEBI:58349"/>
    </ligand>
</feature>
<feature type="binding site" evidence="1">
    <location>
        <position position="180"/>
    </location>
    <ligand>
        <name>substrate</name>
    </ligand>
</feature>
<feature type="binding site" evidence="1">
    <location>
        <position position="187"/>
    </location>
    <ligand>
        <name>substrate</name>
    </ligand>
</feature>
<feature type="binding site" evidence="1">
    <location>
        <begin position="201"/>
        <end position="204"/>
    </location>
    <ligand>
        <name>substrate</name>
    </ligand>
</feature>
<feature type="binding site" evidence="1">
    <location>
        <position position="209"/>
    </location>
    <ligand>
        <name>substrate</name>
    </ligand>
</feature>
<feature type="binding site" evidence="1">
    <location>
        <position position="272"/>
    </location>
    <ligand>
        <name>substrate</name>
    </ligand>
</feature>
<feature type="modified residue" description="N6-acetyllysine" evidence="1">
    <location>
        <position position="267"/>
    </location>
</feature>
<sequence length="310" mass="34894">MIIVTGGAGFIGSNIVKALNDKGITDILVVDNLKDGTKFVNLVDLDIADYMDKEDFLIQIMAGEEFGDVEAIFHEGACSSTTEWDGKYMMDNNYQYSKELLHYCLEREIPFLYASSAATYGGRTSDFIESREYEKPLNVYGYSKFLFDEYVRQILPEANSQIVGFRYFNVYGPREGHKGSMASVAFHLNTQLNNGESPKLFEGSENFKRDFVYVGDVADVNLWFLENGVSGIFNLGTGRAESFQAVADATLAYHKKGQIEYIPFPDKLKGRYQAFTQADLTNLRAAGYDKPFKTVAEGVTEYMAWLNRDA</sequence>
<protein>
    <recommendedName>
        <fullName evidence="1">ADP-L-glycero-D-manno-heptose-6-epimerase</fullName>
        <ecNumber evidence="1">5.1.3.20</ecNumber>
    </recommendedName>
    <alternativeName>
        <fullName evidence="1">ADP-L-glycero-beta-D-manno-heptose-6-epimerase</fullName>
        <shortName evidence="1">ADP-glyceromanno-heptose 6-epimerase</shortName>
        <shortName evidence="1">ADP-hep 6-epimerase</shortName>
        <shortName evidence="1">AGME</shortName>
    </alternativeName>
</protein>
<gene>
    <name evidence="1" type="primary">hldD</name>
    <name type="ordered locus">ECP_3719</name>
</gene>
<accession>Q0TBI8</accession>
<proteinExistence type="inferred from homology"/>
<organism>
    <name type="scientific">Escherichia coli O6:K15:H31 (strain 536 / UPEC)</name>
    <dbReference type="NCBI Taxonomy" id="362663"/>
    <lineage>
        <taxon>Bacteria</taxon>
        <taxon>Pseudomonadati</taxon>
        <taxon>Pseudomonadota</taxon>
        <taxon>Gammaproteobacteria</taxon>
        <taxon>Enterobacterales</taxon>
        <taxon>Enterobacteriaceae</taxon>
        <taxon>Escherichia</taxon>
    </lineage>
</organism>
<keyword id="KW-0007">Acetylation</keyword>
<keyword id="KW-0119">Carbohydrate metabolism</keyword>
<keyword id="KW-0413">Isomerase</keyword>
<keyword id="KW-0521">NADP</keyword>
<reference key="1">
    <citation type="journal article" date="2006" name="Mol. Microbiol.">
        <title>Role of pathogenicity island-associated integrases in the genome plasticity of uropathogenic Escherichia coli strain 536.</title>
        <authorList>
            <person name="Hochhut B."/>
            <person name="Wilde C."/>
            <person name="Balling G."/>
            <person name="Middendorf B."/>
            <person name="Dobrindt U."/>
            <person name="Brzuszkiewicz E."/>
            <person name="Gottschalk G."/>
            <person name="Carniel E."/>
            <person name="Hacker J."/>
        </authorList>
    </citation>
    <scope>NUCLEOTIDE SEQUENCE [LARGE SCALE GENOMIC DNA]</scope>
    <source>
        <strain>536 / UPEC</strain>
    </source>
</reference>